<name>ARNT_SHIFL</name>
<keyword id="KW-0997">Cell inner membrane</keyword>
<keyword id="KW-1003">Cell membrane</keyword>
<keyword id="KW-0328">Glycosyltransferase</keyword>
<keyword id="KW-0441">Lipid A biosynthesis</keyword>
<keyword id="KW-0444">Lipid biosynthesis</keyword>
<keyword id="KW-0443">Lipid metabolism</keyword>
<keyword id="KW-0448">Lipopolysaccharide biosynthesis</keyword>
<keyword id="KW-0472">Membrane</keyword>
<keyword id="KW-1185">Reference proteome</keyword>
<keyword id="KW-0808">Transferase</keyword>
<keyword id="KW-0812">Transmembrane</keyword>
<keyword id="KW-1133">Transmembrane helix</keyword>
<accession>Q83KB6</accession>
<accession>Q7UC62</accession>
<feature type="chain" id="PRO_0000121513" description="Undecaprenyl phosphate-alpha-4-amino-4-deoxy-L-arabinose arabinosyl transferase">
    <location>
        <begin position="1"/>
        <end position="550"/>
    </location>
</feature>
<feature type="transmembrane region" description="Helical" evidence="1">
    <location>
        <begin position="7"/>
        <end position="27"/>
    </location>
</feature>
<feature type="transmembrane region" description="Helical" evidence="1">
    <location>
        <begin position="81"/>
        <end position="101"/>
    </location>
</feature>
<feature type="transmembrane region" description="Helical" evidence="1">
    <location>
        <begin position="111"/>
        <end position="133"/>
    </location>
</feature>
<feature type="transmembrane region" description="Helical" evidence="1">
    <location>
        <begin position="137"/>
        <end position="154"/>
    </location>
</feature>
<feature type="transmembrane region" description="Helical" evidence="1">
    <location>
        <begin position="165"/>
        <end position="185"/>
    </location>
</feature>
<feature type="transmembrane region" description="Helical" evidence="1">
    <location>
        <begin position="204"/>
        <end position="224"/>
    </location>
</feature>
<feature type="transmembrane region" description="Helical" evidence="1">
    <location>
        <begin position="255"/>
        <end position="275"/>
    </location>
</feature>
<feature type="transmembrane region" description="Helical" evidence="1">
    <location>
        <begin position="288"/>
        <end position="308"/>
    </location>
</feature>
<feature type="transmembrane region" description="Helical" evidence="1">
    <location>
        <begin position="315"/>
        <end position="335"/>
    </location>
</feature>
<feature type="transmembrane region" description="Helical" evidence="1">
    <location>
        <begin position="346"/>
        <end position="366"/>
    </location>
</feature>
<feature type="transmembrane region" description="Helical" evidence="1">
    <location>
        <begin position="382"/>
        <end position="402"/>
    </location>
</feature>
<feature type="transmembrane region" description="Helical" evidence="1">
    <location>
        <begin position="406"/>
        <end position="426"/>
    </location>
</feature>
<comment type="function">
    <text evidence="1">Catalyzes the transfer of the L-Ara4N moiety of the glycolipid undecaprenyl phosphate-alpha-L-Ara4N to lipid A. The modified arabinose is attached to lipid A and is required for resistance to polymyxin and cationic antimicrobial peptides.</text>
</comment>
<comment type="catalytic activity">
    <reaction evidence="1">
        <text>4-amino-4-deoxy-alpha-L-arabinopyranosyl di-trans,octa-cis-undecaprenyl phosphate + lipid IVA = lipid IIA + di-trans,octa-cis-undecaprenyl phosphate.</text>
        <dbReference type="EC" id="2.4.2.43"/>
    </reaction>
</comment>
<comment type="pathway">
    <text evidence="1">Lipopolysaccharide metabolism; 4-amino-4-deoxy-beta-L-arabinose-lipid A biosynthesis.</text>
</comment>
<comment type="subcellular location">
    <subcellularLocation>
        <location evidence="1">Cell inner membrane</location>
        <topology evidence="1">Multi-pass membrane protein</topology>
    </subcellularLocation>
</comment>
<comment type="similarity">
    <text evidence="1">Belongs to the glycosyltransferase 83 family.</text>
</comment>
<sequence>MKSVRYLIGIFAFIACYYLLPISTRLLWQPDETRYAEISREMLASGDWIVPHLLGLRYFEKPIAGYWINSIGQWLFGANNFGVRAGVIFATLLTAALVTWFTLRLWRDKRLALLATVIYLSLFIVYAIGTYAVLDPFIAFWLVAGMCSFWLAMQAQTWKGKSAGFLLLGITCGMGVMTKGFLALAVPVLSVLPWVATQKRWKDLFIYGWLAVISCVLTVLPWGLAIAQREPDFWHYFFWVEHIQRFALDDAQHRAPFWYYVPVIIAGSLPWLGLLPGALYTGWKNRKHSATVYLLSWTIMPLLFFSVAKGKLPTYILSCFAPLAMLLAHYALLAAKNNPLALRINGWINIAFGVTGIIATFVISPWGPMNTPVWQTFESYKVFCAWSIFSLWAFFGWYTLTNVEKTWSFAALCPLGLALLVGFSIPDRVMEGKHPQFFVEMTQESLQPSRYILTDSVGVAAGLAWSLQRDDIIMYRQTGELKYGLNYPDAKGRFVSGDEFANWLNQHRQEGIITLVLSVDRDEDINSLAIPPADAIVRQERLVLIQYRPK</sequence>
<reference key="1">
    <citation type="journal article" date="2002" name="Nucleic Acids Res.">
        <title>Genome sequence of Shigella flexneri 2a: insights into pathogenicity through comparison with genomes of Escherichia coli K12 and O157.</title>
        <authorList>
            <person name="Jin Q."/>
            <person name="Yuan Z."/>
            <person name="Xu J."/>
            <person name="Wang Y."/>
            <person name="Shen Y."/>
            <person name="Lu W."/>
            <person name="Wang J."/>
            <person name="Liu H."/>
            <person name="Yang J."/>
            <person name="Yang F."/>
            <person name="Zhang X."/>
            <person name="Zhang J."/>
            <person name="Yang G."/>
            <person name="Wu H."/>
            <person name="Qu D."/>
            <person name="Dong J."/>
            <person name="Sun L."/>
            <person name="Xue Y."/>
            <person name="Zhao A."/>
            <person name="Gao Y."/>
            <person name="Zhu J."/>
            <person name="Kan B."/>
            <person name="Ding K."/>
            <person name="Chen S."/>
            <person name="Cheng H."/>
            <person name="Yao Z."/>
            <person name="He B."/>
            <person name="Chen R."/>
            <person name="Ma D."/>
            <person name="Qiang B."/>
            <person name="Wen Y."/>
            <person name="Hou Y."/>
            <person name="Yu J."/>
        </authorList>
    </citation>
    <scope>NUCLEOTIDE SEQUENCE [LARGE SCALE GENOMIC DNA]</scope>
    <source>
        <strain>301 / Serotype 2a</strain>
    </source>
</reference>
<reference key="2">
    <citation type="journal article" date="2003" name="Infect. Immun.">
        <title>Complete genome sequence and comparative genomics of Shigella flexneri serotype 2a strain 2457T.</title>
        <authorList>
            <person name="Wei J."/>
            <person name="Goldberg M.B."/>
            <person name="Burland V."/>
            <person name="Venkatesan M.M."/>
            <person name="Deng W."/>
            <person name="Fournier G."/>
            <person name="Mayhew G.F."/>
            <person name="Plunkett G. III"/>
            <person name="Rose D.J."/>
            <person name="Darling A."/>
            <person name="Mau B."/>
            <person name="Perna N.T."/>
            <person name="Payne S.M."/>
            <person name="Runyen-Janecky L.J."/>
            <person name="Zhou S."/>
            <person name="Schwartz D.C."/>
            <person name="Blattner F.R."/>
        </authorList>
    </citation>
    <scope>NUCLEOTIDE SEQUENCE [LARGE SCALE GENOMIC DNA]</scope>
    <source>
        <strain>ATCC 700930 / 2457T / Serotype 2a</strain>
    </source>
</reference>
<proteinExistence type="inferred from homology"/>
<evidence type="ECO:0000255" key="1">
    <source>
        <dbReference type="HAMAP-Rule" id="MF_01165"/>
    </source>
</evidence>
<gene>
    <name evidence="1" type="primary">arnT</name>
    <name type="ordered locus">SF2336</name>
    <name type="ordered locus">S2469</name>
</gene>
<dbReference type="EC" id="2.4.2.43" evidence="1"/>
<dbReference type="EMBL" id="AE005674">
    <property type="protein sequence ID" value="AAN43850.2"/>
    <property type="molecule type" value="Genomic_DNA"/>
</dbReference>
<dbReference type="EMBL" id="AE014073">
    <property type="protein sequence ID" value="AAP17669.1"/>
    <property type="molecule type" value="Genomic_DNA"/>
</dbReference>
<dbReference type="RefSeq" id="NP_708143.2">
    <property type="nucleotide sequence ID" value="NC_004337.2"/>
</dbReference>
<dbReference type="RefSeq" id="WP_000844002.1">
    <property type="nucleotide sequence ID" value="NZ_WPGW01000032.1"/>
</dbReference>
<dbReference type="SMR" id="Q83KB6"/>
<dbReference type="STRING" id="198214.SF2336"/>
<dbReference type="PaxDb" id="198214-SF2336"/>
<dbReference type="GeneID" id="1027765"/>
<dbReference type="KEGG" id="sfl:SF2336"/>
<dbReference type="KEGG" id="sfx:S2469"/>
<dbReference type="PATRIC" id="fig|198214.7.peg.2799"/>
<dbReference type="HOGENOM" id="CLU_019200_2_1_6"/>
<dbReference type="UniPathway" id="UPA00037"/>
<dbReference type="Proteomes" id="UP000001006">
    <property type="component" value="Chromosome"/>
</dbReference>
<dbReference type="Proteomes" id="UP000002673">
    <property type="component" value="Chromosome"/>
</dbReference>
<dbReference type="GO" id="GO:0005886">
    <property type="term" value="C:plasma membrane"/>
    <property type="evidence" value="ECO:0007669"/>
    <property type="project" value="UniProtKB-SubCell"/>
</dbReference>
<dbReference type="GO" id="GO:0103015">
    <property type="term" value="F:4-amino-4-deoxy-L-arabinose transferase activity"/>
    <property type="evidence" value="ECO:0007669"/>
    <property type="project" value="UniProtKB-EC"/>
</dbReference>
<dbReference type="GO" id="GO:0000030">
    <property type="term" value="F:mannosyltransferase activity"/>
    <property type="evidence" value="ECO:0007669"/>
    <property type="project" value="InterPro"/>
</dbReference>
<dbReference type="GO" id="GO:0009245">
    <property type="term" value="P:lipid A biosynthetic process"/>
    <property type="evidence" value="ECO:0007669"/>
    <property type="project" value="UniProtKB-UniRule"/>
</dbReference>
<dbReference type="GO" id="GO:0009103">
    <property type="term" value="P:lipopolysaccharide biosynthetic process"/>
    <property type="evidence" value="ECO:0007669"/>
    <property type="project" value="UniProtKB-KW"/>
</dbReference>
<dbReference type="GO" id="GO:0006493">
    <property type="term" value="P:protein O-linked glycosylation"/>
    <property type="evidence" value="ECO:0007669"/>
    <property type="project" value="InterPro"/>
</dbReference>
<dbReference type="GO" id="GO:0010041">
    <property type="term" value="P:response to iron(III) ion"/>
    <property type="evidence" value="ECO:0007669"/>
    <property type="project" value="TreeGrafter"/>
</dbReference>
<dbReference type="HAMAP" id="MF_01165">
    <property type="entry name" value="ArnT_transfer"/>
    <property type="match status" value="1"/>
</dbReference>
<dbReference type="InterPro" id="IPR022839">
    <property type="entry name" value="ArnT_tfrase"/>
</dbReference>
<dbReference type="InterPro" id="IPR003342">
    <property type="entry name" value="Glyco_trans_39/83"/>
</dbReference>
<dbReference type="InterPro" id="IPR050297">
    <property type="entry name" value="LipidA_mod_glycosyltrf_83"/>
</dbReference>
<dbReference type="NCBIfam" id="NF009784">
    <property type="entry name" value="PRK13279.1"/>
    <property type="match status" value="1"/>
</dbReference>
<dbReference type="PANTHER" id="PTHR33908">
    <property type="entry name" value="MANNOSYLTRANSFERASE YKCB-RELATED"/>
    <property type="match status" value="1"/>
</dbReference>
<dbReference type="PANTHER" id="PTHR33908:SF3">
    <property type="entry name" value="UNDECAPRENYL PHOSPHATE-ALPHA-4-AMINO-4-DEOXY-L-ARABINOSE ARABINOSYL TRANSFERASE"/>
    <property type="match status" value="1"/>
</dbReference>
<dbReference type="Pfam" id="PF02366">
    <property type="entry name" value="PMT"/>
    <property type="match status" value="1"/>
</dbReference>
<protein>
    <recommendedName>
        <fullName evidence="1">Undecaprenyl phosphate-alpha-4-amino-4-deoxy-L-arabinose arabinosyl transferase</fullName>
        <ecNumber evidence="1">2.4.2.43</ecNumber>
    </recommendedName>
    <alternativeName>
        <fullName evidence="1">4-amino-4-deoxy-L-arabinose lipid A transferase</fullName>
    </alternativeName>
    <alternativeName>
        <fullName evidence="1">Lipid IV(A) 4-amino-4-deoxy-L-arabinosyltransferase</fullName>
    </alternativeName>
    <alternativeName>
        <fullName evidence="1">Undecaprenyl phosphate-alpha-L-Ara4N transferase</fullName>
    </alternativeName>
</protein>
<organism>
    <name type="scientific">Shigella flexneri</name>
    <dbReference type="NCBI Taxonomy" id="623"/>
    <lineage>
        <taxon>Bacteria</taxon>
        <taxon>Pseudomonadati</taxon>
        <taxon>Pseudomonadota</taxon>
        <taxon>Gammaproteobacteria</taxon>
        <taxon>Enterobacterales</taxon>
        <taxon>Enterobacteriaceae</taxon>
        <taxon>Shigella</taxon>
    </lineage>
</organism>